<comment type="function">
    <text evidence="3 11">Dual specificity phosphatase component of the PI(3,5)P2 regulatory complex which regulates both the synthesis and turnover of phosphatidylinositol 3,5-bisphosphate (PtdIns(3,5)P2) (PubMed:17556371, PubMed:33098764). Catalyzes the dephosphorylation of phosphatidylinositol 3,5-bisphosphate (PtdIns(3,5)P2) to form phosphatidylinositol 3-phosphate (PubMed:33098764). Has serine-protein phosphatase activity acting on PIKfyve to stimulate its lipid kinase activity, its catalytically activity being required for maximal PI(3,5)P2 production (PubMed:33098764). In vitro, hydrolyzes all three D5-phosphorylated polyphosphoinositide and although displaying preferences for PtdIns(3,5)P2, it is capable of hydrolyzing PtdIns(3,4,5)P3 and PtdIns(4,5)P2, at least in vitro (PubMed:17556371).</text>
</comment>
<comment type="catalytic activity">
    <reaction evidence="3 11">
        <text>a 1,2-diacyl-sn-glycero-3-phospho-(1D-myo-inositol-3,5-bisphosphate) + H2O = a 1,2-diacyl-sn-glycero-3-phospho-(1D-myo-inositol-3-phosphate) + phosphate</text>
        <dbReference type="Rhea" id="RHEA:32955"/>
        <dbReference type="ChEBI" id="CHEBI:15377"/>
        <dbReference type="ChEBI" id="CHEBI:43474"/>
        <dbReference type="ChEBI" id="CHEBI:57923"/>
        <dbReference type="ChEBI" id="CHEBI:58088"/>
    </reaction>
    <physiologicalReaction direction="left-to-right" evidence="3 11">
        <dbReference type="Rhea" id="RHEA:32956"/>
    </physiologicalReaction>
</comment>
<comment type="catalytic activity">
    <reaction evidence="3">
        <text>a 1,2-diacyl-sn-glycero-3-phospho-(1D-myo-inositol-4,5-bisphosphate) + H2O = a 1,2-diacyl-sn-glycero-3-phospho-(1D-myo-inositol 4-phosphate) + phosphate</text>
        <dbReference type="Rhea" id="RHEA:22764"/>
        <dbReference type="ChEBI" id="CHEBI:15377"/>
        <dbReference type="ChEBI" id="CHEBI:43474"/>
        <dbReference type="ChEBI" id="CHEBI:58178"/>
        <dbReference type="ChEBI" id="CHEBI:58456"/>
        <dbReference type="EC" id="3.1.3.36"/>
    </reaction>
    <physiologicalReaction direction="left-to-right" evidence="3">
        <dbReference type="Rhea" id="RHEA:22765"/>
    </physiologicalReaction>
</comment>
<comment type="catalytic activity">
    <reaction evidence="3">
        <text>a 1,2-diacyl-sn-glycero-3-phospho-(1D-myo-inositol-3,4,5-trisphosphate) + H2O = a 1,2-diacyl-sn-glycero-3-phospho-(1D-myo-inositol-3,4-bisphosphate) + phosphate</text>
        <dbReference type="Rhea" id="RHEA:25528"/>
        <dbReference type="ChEBI" id="CHEBI:15377"/>
        <dbReference type="ChEBI" id="CHEBI:43474"/>
        <dbReference type="ChEBI" id="CHEBI:57658"/>
        <dbReference type="ChEBI" id="CHEBI:57836"/>
        <dbReference type="EC" id="3.1.3.86"/>
    </reaction>
    <physiologicalReaction direction="left-to-right" evidence="3">
        <dbReference type="Rhea" id="RHEA:25529"/>
    </physiologicalReaction>
</comment>
<comment type="catalytic activity">
    <reaction evidence="11">
        <text>O-phospho-L-seryl-[protein] + H2O = L-seryl-[protein] + phosphate</text>
        <dbReference type="Rhea" id="RHEA:20629"/>
        <dbReference type="Rhea" id="RHEA-COMP:9863"/>
        <dbReference type="Rhea" id="RHEA-COMP:11604"/>
        <dbReference type="ChEBI" id="CHEBI:15377"/>
        <dbReference type="ChEBI" id="CHEBI:29999"/>
        <dbReference type="ChEBI" id="CHEBI:43474"/>
        <dbReference type="ChEBI" id="CHEBI:83421"/>
        <dbReference type="EC" id="3.1.3.16"/>
    </reaction>
    <physiologicalReaction direction="left-to-right" evidence="11">
        <dbReference type="Rhea" id="RHEA:20630"/>
    </physiologicalReaction>
</comment>
<comment type="subunit">
    <text evidence="3 5 11">Component of the PI(3,5)P2 regulatory complex/PAS complex, at least composed of PIKFYVE, FIG4 and VAC14. VAC14 nucleates the assembly of the complex and serves as a scaffold by pentamerizing into a star-shaped structure, which can bind a single copy each of PIKFYVE and FIG4 and coordinates their activities.</text>
</comment>
<comment type="interaction">
    <interactant intactId="EBI-4290773">
        <id>Q92562</id>
    </interactant>
    <interactant intactId="EBI-739467">
        <id>Q9H8Y8</id>
        <label>GORASP2</label>
    </interactant>
    <organismsDiffer>false</organismsDiffer>
    <experiments>3</experiments>
</comment>
<comment type="interaction">
    <interactant intactId="EBI-4290773">
        <id>Q92562</id>
    </interactant>
    <interactant intactId="EBI-6138650">
        <id>Q9Y2I7</id>
        <label>PIKFYVE</label>
    </interactant>
    <organismsDiffer>false</organismsDiffer>
    <experiments>3</experiments>
</comment>
<comment type="interaction">
    <interactant intactId="EBI-4290773">
        <id>Q92562</id>
    </interactant>
    <interactant intactId="EBI-2107455">
        <id>Q08AM6</id>
        <label>VAC14</label>
    </interactant>
    <organismsDiffer>false</organismsDiffer>
    <experiments>8</experiments>
</comment>
<comment type="subcellular location">
    <subcellularLocation>
        <location evidence="3">Endosome membrane</location>
    </subcellularLocation>
    <text evidence="3">Localization requires VAC14 and PIKFYVE.</text>
</comment>
<comment type="disease" evidence="4 7 8">
    <disease id="DI-00291">
        <name>Charcot-Marie-Tooth disease, demyelinating, type 4J</name>
        <acronym>CMT4J</acronym>
        <description>A recessive demyelinating form of Charcot-Marie-Tooth disease, a disorder of the peripheral nervous system, characterized by progressive weakness and atrophy, initially of the peroneal muscles and later of the distal muscles of the arms. Charcot-Marie-Tooth disease is classified in two main groups on the basis of electrophysiologic properties and histopathology: primary peripheral demyelinating neuropathies (designated CMT1 when they are dominantly inherited) and primary peripheral axonal neuropathies (CMT2). Demyelinating neuropathies are characterized by severely reduced nerve conduction velocities (less than 38 m/sec), segmental demyelination and remyelination with onion bulb formations on nerve biopsy, slowly progressive distal muscle atrophy and weakness, absent deep tendon reflexes, and hollow feet. By convention autosomal recessive forms of demyelinating Charcot-Marie-Tooth disease are designated CMT4.</description>
        <dbReference type="MIM" id="611228"/>
    </disease>
    <text>The disease is caused by variants affecting the gene represented in this entry.</text>
</comment>
<comment type="disease" evidence="6">
    <disease id="DI-00115">
        <name>Amyotrophic lateral sclerosis 11</name>
        <acronym>ALS11</acronym>
        <description>A neurodegenerative disorder affecting upper motor neurons in the brain and lower motor neurons in the brain stem and spinal cord, resulting in fatal paralysis. Sensory abnormalities are absent. The pathologic hallmarks of the disease include pallor of the corticospinal tract due to loss of motor neurons, presence of ubiquitin-positive inclusions within surviving motor neurons, and deposition of pathologic aggregates. The etiology of amyotrophic lateral sclerosis is likely to be multifactorial, involving both genetic and environmental factors. The disease is inherited in 5-10% of the cases.</description>
        <dbReference type="MIM" id="612577"/>
    </disease>
    <text>The disease is caused by variants affecting the gene represented in this entry.</text>
</comment>
<comment type="disease" evidence="9">
    <disease id="DI-03789">
        <name>Yunis-Varon syndrome</name>
        <acronym>YVS</acronym>
        <description>A severe autosomal recessive disorder characterized by skeletal defects, including cleidocranial dysplasia and digital anomalies, and severe neurologic involvement with neuronal loss. Enlarged cytoplasmic vacuoles are found in neurons, muscle, and cartilage. The disorder is usually lethal in infancy.</description>
        <dbReference type="MIM" id="216340"/>
    </disease>
    <text>The disease is caused by variants affecting the gene represented in this entry.</text>
</comment>
<comment type="disease" evidence="10">
    <disease id="DI-04237">
        <name>Polymicrogyria, bilateral temporooccipital</name>
        <acronym>BTOP</acronym>
        <description>A disease characterized by temporo-occipital polymicrogyria, psychiatric manifestations, and epilepsy.</description>
        <dbReference type="MIM" id="612691"/>
    </disease>
    <text>The disease is caused by variants affecting the gene represented in this entry.</text>
</comment>
<comment type="sequence caution" evidence="14">
    <conflict type="erroneous initiation">
        <sequence resource="EMBL-CDS" id="BAA13403"/>
    </conflict>
    <text>Extended N-terminus.</text>
</comment>
<feature type="chain" id="PRO_0000209743" description="Polyphosphoinositide phosphatase">
    <location>
        <begin position="1"/>
        <end position="907"/>
    </location>
</feature>
<feature type="domain" description="SAC" evidence="1">
    <location>
        <begin position="154"/>
        <end position="547"/>
    </location>
</feature>
<feature type="region of interest" description="Disordered" evidence="2">
    <location>
        <begin position="707"/>
        <end position="788"/>
    </location>
</feature>
<feature type="compositionally biased region" description="Acidic residues" evidence="2">
    <location>
        <begin position="758"/>
        <end position="770"/>
    </location>
</feature>
<feature type="sequence variant" id="VAR_071957" description="In CMT4J; dbSNP:rs587777713." evidence="8">
    <original>L</original>
    <variation>P</variation>
    <location>
        <position position="17"/>
    </location>
</feature>
<feature type="sequence variant" id="VAR_036974" description="In CMT4J; the mutant protein is unstable; low levels of the protein results from impaired interaction with VAC14; dbSNP:rs121908287." evidence="4 7 8">
    <original>I</original>
    <variation>T</variation>
    <location>
        <position position="41"/>
    </location>
</feature>
<feature type="sequence variant" id="VAR_054831" description="In dbSNP:rs1296748657." evidence="6">
    <original>D</original>
    <variation>G</variation>
    <location>
        <position position="48"/>
    </location>
</feature>
<feature type="sequence variant" id="VAR_054832" description="In ALS11; dbSNP:rs121908290." evidence="6">
    <original>D</original>
    <variation>Y</variation>
    <location>
        <position position="53"/>
    </location>
</feature>
<feature type="sequence variant" id="VAR_070051" description="In YVS; complete loss of function mutation; dbSNP:rs397509395." evidence="9">
    <original>G</original>
    <variation>D</variation>
    <location>
        <position position="104"/>
    </location>
</feature>
<feature type="sequence variant" id="VAR_070052" description="In YVS; complete loss of function mutation; dbSNP:rs397514707." evidence="9">
    <original>L</original>
    <variation>P</variation>
    <location>
        <position position="175"/>
    </location>
</feature>
<feature type="sequence variant" id="VAR_071958" description="In CMT4J; loss of function; dbSNP:rs587777714." evidence="8">
    <original>E</original>
    <variation>K</variation>
    <location>
        <position position="302"/>
    </location>
</feature>
<feature type="sequence variant" id="VAR_020378" description="In dbSNP:rs2295837.">
    <original>M</original>
    <variation>L</variation>
    <location>
        <position position="364"/>
    </location>
</feature>
<feature type="sequence variant" id="VAR_054833" description="In dbSNP:rs1562667776." evidence="6">
    <original>R</original>
    <variation>G</variation>
    <location>
        <position position="388"/>
    </location>
</feature>
<feature type="sequence variant" id="VAR_054834" description="In dbSNP:rs959747660." evidence="6">
    <original>I</original>
    <variation>V</variation>
    <location>
        <position position="411"/>
    </location>
</feature>
<feature type="sequence variant" id="VAR_054835" description="In dbSNP:rs150301327." evidence="6">
    <original>Y</original>
    <variation>C</variation>
    <location>
        <position position="647"/>
    </location>
</feature>
<feature type="sequence variant" id="VAR_022826" description="In dbSNP:rs9885672." evidence="12">
    <original>V</original>
    <variation>A</variation>
    <location>
        <position position="654"/>
    </location>
</feature>
<feature type="sequence variant" id="VAR_071959" description="In BTOP; partial loss of function; dbSNP:rs587777716." evidence="10">
    <original>D</original>
    <variation>V</variation>
    <location>
        <position position="783"/>
    </location>
</feature>
<feature type="sequence variant" id="VAR_054836" description="In dbSNP:rs1162967341." evidence="6">
    <original>I</original>
    <variation>T</variation>
    <location>
        <position position="902"/>
    </location>
</feature>
<feature type="mutagenesis site" description="Loss of phosphatase activity on PIKFYVE." evidence="11">
    <original>C</original>
    <variation>S</variation>
    <location>
        <position position="486"/>
    </location>
</feature>
<feature type="mutagenesis site" description="Loss of activity." evidence="3">
    <original>D</original>
    <variation>A</variation>
    <location>
        <position position="488"/>
    </location>
</feature>
<feature type="sequence conflict" description="In Ref. 2; BAD96452." evidence="14" ref="2">
    <original>V</original>
    <variation>A</variation>
    <location>
        <position position="310"/>
    </location>
</feature>
<feature type="sequence conflict" description="In Ref. 2; BAD96452." evidence="14" ref="2">
    <original>S</original>
    <variation>P</variation>
    <location>
        <position position="453"/>
    </location>
</feature>
<feature type="sequence conflict" description="In Ref. 2; BAD96452." evidence="14" ref="2">
    <original>F</original>
    <variation>S</variation>
    <location>
        <position position="598"/>
    </location>
</feature>
<dbReference type="EC" id="3.1.3.-" evidence="3 11"/>
<dbReference type="EC" id="3.1.3.36" evidence="3"/>
<dbReference type="EC" id="3.1.3.86" evidence="3"/>
<dbReference type="EC" id="3.1.3.16" evidence="11"/>
<dbReference type="EMBL" id="D87464">
    <property type="protein sequence ID" value="BAA13403.2"/>
    <property type="status" value="ALT_INIT"/>
    <property type="molecule type" value="mRNA"/>
</dbReference>
<dbReference type="EMBL" id="AK222732">
    <property type="protein sequence ID" value="BAD96452.1"/>
    <property type="molecule type" value="mRNA"/>
</dbReference>
<dbReference type="EMBL" id="AL133472">
    <property type="status" value="NOT_ANNOTATED_CDS"/>
    <property type="molecule type" value="Genomic_DNA"/>
</dbReference>
<dbReference type="EMBL" id="AL512303">
    <property type="status" value="NOT_ANNOTATED_CDS"/>
    <property type="molecule type" value="Genomic_DNA"/>
</dbReference>
<dbReference type="EMBL" id="BC041338">
    <property type="protein sequence ID" value="AAH41338.1"/>
    <property type="molecule type" value="mRNA"/>
</dbReference>
<dbReference type="CCDS" id="CCDS5078.1"/>
<dbReference type="RefSeq" id="NP_055660.1">
    <property type="nucleotide sequence ID" value="NM_014845.6"/>
</dbReference>
<dbReference type="PDB" id="7K1W">
    <property type="method" value="EM"/>
    <property type="resolution" value="5.10 A"/>
    <property type="chains" value="F=1-907"/>
</dbReference>
<dbReference type="PDBsum" id="7K1W"/>
<dbReference type="SMR" id="Q92562"/>
<dbReference type="BioGRID" id="115225">
    <property type="interactions" value="28"/>
</dbReference>
<dbReference type="CORUM" id="Q92562"/>
<dbReference type="FunCoup" id="Q92562">
    <property type="interactions" value="2392"/>
</dbReference>
<dbReference type="IntAct" id="Q92562">
    <property type="interactions" value="12"/>
</dbReference>
<dbReference type="MINT" id="Q92562"/>
<dbReference type="STRING" id="9606.ENSP00000230124"/>
<dbReference type="DEPOD" id="FIG4"/>
<dbReference type="GlyGen" id="Q92562">
    <property type="glycosylation" value="1 site, 1 O-linked glycan (1 site)"/>
</dbReference>
<dbReference type="iPTMnet" id="Q92562"/>
<dbReference type="PhosphoSitePlus" id="Q92562"/>
<dbReference type="SwissPalm" id="Q92562"/>
<dbReference type="BioMuta" id="FIG4"/>
<dbReference type="DMDM" id="2497367"/>
<dbReference type="jPOST" id="Q92562"/>
<dbReference type="MassIVE" id="Q92562"/>
<dbReference type="PaxDb" id="9606-ENSP00000230124"/>
<dbReference type="PeptideAtlas" id="Q92562"/>
<dbReference type="ProteomicsDB" id="75318"/>
<dbReference type="Pumba" id="Q92562"/>
<dbReference type="TopDownProteomics" id="Q92562"/>
<dbReference type="ABCD" id="Q92562">
    <property type="antibodies" value="1 sequenced antibody"/>
</dbReference>
<dbReference type="Antibodypedia" id="56156">
    <property type="antibodies" value="238 antibodies from 29 providers"/>
</dbReference>
<dbReference type="DNASU" id="9896"/>
<dbReference type="Ensembl" id="ENST00000230124.8">
    <property type="protein sequence ID" value="ENSP00000230124.4"/>
    <property type="gene ID" value="ENSG00000112367.12"/>
</dbReference>
<dbReference type="GeneID" id="9896"/>
<dbReference type="KEGG" id="hsa:9896"/>
<dbReference type="MANE-Select" id="ENST00000230124.8">
    <property type="protein sequence ID" value="ENSP00000230124.4"/>
    <property type="RefSeq nucleotide sequence ID" value="NM_014845.6"/>
    <property type="RefSeq protein sequence ID" value="NP_055660.1"/>
</dbReference>
<dbReference type="UCSC" id="uc003ptt.3">
    <property type="organism name" value="human"/>
</dbReference>
<dbReference type="AGR" id="HGNC:16873"/>
<dbReference type="CTD" id="9896"/>
<dbReference type="DisGeNET" id="9896"/>
<dbReference type="GeneCards" id="FIG4"/>
<dbReference type="HGNC" id="HGNC:16873">
    <property type="gene designation" value="FIG4"/>
</dbReference>
<dbReference type="HPA" id="ENSG00000112367">
    <property type="expression patterns" value="Low tissue specificity"/>
</dbReference>
<dbReference type="MalaCards" id="FIG4"/>
<dbReference type="MIM" id="216340">
    <property type="type" value="phenotype"/>
</dbReference>
<dbReference type="MIM" id="609390">
    <property type="type" value="gene"/>
</dbReference>
<dbReference type="MIM" id="611228">
    <property type="type" value="phenotype"/>
</dbReference>
<dbReference type="MIM" id="612577">
    <property type="type" value="phenotype"/>
</dbReference>
<dbReference type="MIM" id="612691">
    <property type="type" value="phenotype"/>
</dbReference>
<dbReference type="neXtProt" id="NX_Q92562"/>
<dbReference type="OpenTargets" id="ENSG00000112367"/>
<dbReference type="Orphanet" id="803">
    <property type="disease" value="Amyotrophic lateral sclerosis"/>
</dbReference>
<dbReference type="Orphanet" id="208441">
    <property type="disease" value="Bilateral parasagittal parieto-occipital polymicrogyria"/>
</dbReference>
<dbReference type="Orphanet" id="139515">
    <property type="disease" value="Charcot-Marie-Tooth disease type 4J"/>
</dbReference>
<dbReference type="Orphanet" id="3472">
    <property type="disease" value="Yunis-Varon syndrome"/>
</dbReference>
<dbReference type="PharmGKB" id="PA162388528"/>
<dbReference type="VEuPathDB" id="HostDB:ENSG00000112367"/>
<dbReference type="eggNOG" id="KOG1888">
    <property type="taxonomic scope" value="Eukaryota"/>
</dbReference>
<dbReference type="GeneTree" id="ENSGT00550000074943"/>
<dbReference type="HOGENOM" id="CLU_003016_0_3_1"/>
<dbReference type="InParanoid" id="Q92562"/>
<dbReference type="OrthoDB" id="405996at2759"/>
<dbReference type="PAN-GO" id="Q92562">
    <property type="GO annotations" value="3 GO annotations based on evolutionary models"/>
</dbReference>
<dbReference type="PhylomeDB" id="Q92562"/>
<dbReference type="TreeFam" id="TF105702"/>
<dbReference type="BioCyc" id="MetaCyc:HS12771-MONOMER"/>
<dbReference type="PathwayCommons" id="Q92562"/>
<dbReference type="Reactome" id="R-HSA-1660514">
    <property type="pathway name" value="Synthesis of PIPs at the Golgi membrane"/>
</dbReference>
<dbReference type="Reactome" id="R-HSA-1660516">
    <property type="pathway name" value="Synthesis of PIPs at the early endosome membrane"/>
</dbReference>
<dbReference type="Reactome" id="R-HSA-1660517">
    <property type="pathway name" value="Synthesis of PIPs at the late endosome membrane"/>
</dbReference>
<dbReference type="SignaLink" id="Q92562"/>
<dbReference type="SIGNOR" id="Q92562"/>
<dbReference type="BioGRID-ORCS" id="9896">
    <property type="hits" value="35 hits in 1174 CRISPR screens"/>
</dbReference>
<dbReference type="ChiTaRS" id="FIG4">
    <property type="organism name" value="human"/>
</dbReference>
<dbReference type="GeneWiki" id="Fig4"/>
<dbReference type="GenomeRNAi" id="9896"/>
<dbReference type="Pharos" id="Q92562">
    <property type="development level" value="Tbio"/>
</dbReference>
<dbReference type="PRO" id="PR:Q92562"/>
<dbReference type="Proteomes" id="UP000005640">
    <property type="component" value="Chromosome 6"/>
</dbReference>
<dbReference type="RNAct" id="Q92562">
    <property type="molecule type" value="protein"/>
</dbReference>
<dbReference type="Bgee" id="ENSG00000112367">
    <property type="expression patterns" value="Expressed in middle temporal gyrus and 205 other cell types or tissues"/>
</dbReference>
<dbReference type="ExpressionAtlas" id="Q92562">
    <property type="expression patterns" value="baseline and differential"/>
</dbReference>
<dbReference type="GO" id="GO:0031901">
    <property type="term" value="C:early endosome membrane"/>
    <property type="evidence" value="ECO:0000304"/>
    <property type="project" value="Reactome"/>
</dbReference>
<dbReference type="GO" id="GO:0010008">
    <property type="term" value="C:endosome membrane"/>
    <property type="evidence" value="ECO:0000314"/>
    <property type="project" value="UniProtKB"/>
</dbReference>
<dbReference type="GO" id="GO:0000139">
    <property type="term" value="C:Golgi membrane"/>
    <property type="evidence" value="ECO:0000304"/>
    <property type="project" value="Reactome"/>
</dbReference>
<dbReference type="GO" id="GO:0043231">
    <property type="term" value="C:intracellular membrane-bounded organelle"/>
    <property type="evidence" value="ECO:0000314"/>
    <property type="project" value="HPA"/>
</dbReference>
<dbReference type="GO" id="GO:0031902">
    <property type="term" value="C:late endosome membrane"/>
    <property type="evidence" value="ECO:0000304"/>
    <property type="project" value="Reactome"/>
</dbReference>
<dbReference type="GO" id="GO:0005811">
    <property type="term" value="C:lipid droplet"/>
    <property type="evidence" value="ECO:0000314"/>
    <property type="project" value="HPA"/>
</dbReference>
<dbReference type="GO" id="GO:0055037">
    <property type="term" value="C:recycling endosome"/>
    <property type="evidence" value="ECO:0007669"/>
    <property type="project" value="Ensembl"/>
</dbReference>
<dbReference type="GO" id="GO:0034485">
    <property type="term" value="F:phosphatidylinositol-3,4,5-trisphosphate 5-phosphatase activity"/>
    <property type="evidence" value="ECO:0007669"/>
    <property type="project" value="RHEA"/>
</dbReference>
<dbReference type="GO" id="GO:0043813">
    <property type="term" value="F:phosphatidylinositol-3,5-bisphosphate 5-phosphatase activity"/>
    <property type="evidence" value="ECO:0000318"/>
    <property type="project" value="GO_Central"/>
</dbReference>
<dbReference type="GO" id="GO:0004438">
    <property type="term" value="F:phosphatidylinositol-3-phosphate phosphatase activity"/>
    <property type="evidence" value="ECO:0007669"/>
    <property type="project" value="Ensembl"/>
</dbReference>
<dbReference type="GO" id="GO:0004439">
    <property type="term" value="F:phosphatidylinositol-4,5-bisphosphate 5-phosphatase activity"/>
    <property type="evidence" value="ECO:0007669"/>
    <property type="project" value="RHEA"/>
</dbReference>
<dbReference type="GO" id="GO:0043812">
    <property type="term" value="F:phosphatidylinositol-4-phosphate phosphatase activity"/>
    <property type="evidence" value="ECO:0007669"/>
    <property type="project" value="Ensembl"/>
</dbReference>
<dbReference type="GO" id="GO:0004722">
    <property type="term" value="F:protein serine/threonine phosphatase activity"/>
    <property type="evidence" value="ECO:0007669"/>
    <property type="project" value="RHEA"/>
</dbReference>
<dbReference type="GO" id="GO:0007626">
    <property type="term" value="P:locomotory behavior"/>
    <property type="evidence" value="ECO:0007669"/>
    <property type="project" value="Ensembl"/>
</dbReference>
<dbReference type="GO" id="GO:0032288">
    <property type="term" value="P:myelin assembly"/>
    <property type="evidence" value="ECO:0007669"/>
    <property type="project" value="Ensembl"/>
</dbReference>
<dbReference type="GO" id="GO:0031642">
    <property type="term" value="P:negative regulation of myelination"/>
    <property type="evidence" value="ECO:0007669"/>
    <property type="project" value="Ensembl"/>
</dbReference>
<dbReference type="GO" id="GO:0048666">
    <property type="term" value="P:neuron development"/>
    <property type="evidence" value="ECO:0007669"/>
    <property type="project" value="Ensembl"/>
</dbReference>
<dbReference type="GO" id="GO:0006661">
    <property type="term" value="P:phosphatidylinositol biosynthetic process"/>
    <property type="evidence" value="ECO:0000304"/>
    <property type="project" value="Reactome"/>
</dbReference>
<dbReference type="GO" id="GO:0046856">
    <property type="term" value="P:phosphatidylinositol dephosphorylation"/>
    <property type="evidence" value="ECO:0000318"/>
    <property type="project" value="GO_Central"/>
</dbReference>
<dbReference type="GO" id="GO:0043473">
    <property type="term" value="P:pigmentation"/>
    <property type="evidence" value="ECO:0007669"/>
    <property type="project" value="Ensembl"/>
</dbReference>
<dbReference type="GO" id="GO:0010976">
    <property type="term" value="P:positive regulation of neuron projection development"/>
    <property type="evidence" value="ECO:0007669"/>
    <property type="project" value="Ensembl"/>
</dbReference>
<dbReference type="GO" id="GO:0007033">
    <property type="term" value="P:vacuole organization"/>
    <property type="evidence" value="ECO:0007669"/>
    <property type="project" value="Ensembl"/>
</dbReference>
<dbReference type="InterPro" id="IPR043573">
    <property type="entry name" value="Fig4-like"/>
</dbReference>
<dbReference type="InterPro" id="IPR002013">
    <property type="entry name" value="SAC_dom"/>
</dbReference>
<dbReference type="PANTHER" id="PTHR45738">
    <property type="entry name" value="POLYPHOSPHOINOSITIDE PHOSPHATASE"/>
    <property type="match status" value="1"/>
</dbReference>
<dbReference type="PANTHER" id="PTHR45738:SF5">
    <property type="entry name" value="POLYPHOSPHOINOSITIDE PHOSPHATASE"/>
    <property type="match status" value="1"/>
</dbReference>
<dbReference type="Pfam" id="PF02383">
    <property type="entry name" value="Syja_N"/>
    <property type="match status" value="1"/>
</dbReference>
<dbReference type="PROSITE" id="PS50275">
    <property type="entry name" value="SAC"/>
    <property type="match status" value="1"/>
</dbReference>
<sequence length="907" mass="103635">MPTAAAPIISSVQKLVLYETRARYFLVGSNNAETKYRVLKIDRTEPKDLVIIDDRHVYTQQEVRELLGRLDLGNRTKMGQKGSSGLFRAVSAFGVVGFVRFLEGYYIVLITKRRKMADIGGHAIYKVEDTNMIYIPNDSVRVTHPDEARYLRIFQNVDLSSNFYFSYSYDLSHSLQYNLTVLRMPLEMLKSEMTQNRQESFDIFEDEGLITQGGSGVFGICSEPYMKYVWNGELLDIIKSTVHRDWLLYIIHGFCGQSKLLIYGRPVYVTLIARRSSKFAGTRFLKRGANCEGDVANEVETEQILCDASVMSFTAGSYSSYVQVRGSVPLYWSQDISTMMPKPPITLDQADPFAHVAALHFDQMFQRFGSPIIILNLVKEREKRKHERILSEELVAAVTYLNQFLPPEHTIVYIPWDMAKYTKSKLCNVLDRLNVIAESVVKKTGFFVNRPDSYCSILRPDEKWNELGGCVIPTGRLQTGILRTNCVDCLDRTNTAQFMVGKCALAYQLYSLGLIDKPNLQFDTDAVRLFEELYEDHGDTLSLQYGGSQLVHRVKTYRKIAPWTQHSKDIMQTLSRYYSNAFSDADRQDSINLFLGVFHPTEGKPHLWELPTDFYLHHKNTMRLLPTRRSYTYWWTPEVIKHLPLPYDEVICAVNLKKLIVKKFHKYEEEIDIHNEFFRPYELSSFDDTFCLAMTSSARDFMPKTVGIDPSPFTVRKPDETGKSVLGNKSNREEAVLQRKTAASAPPPPSEEAVSSSSEDDSGTDREEEGSVSQRSTPVKMTDAGDSAKVTENVVQPMKELYGINLSDGLSEEDFSIYSRFVQLGQSQHKQDKNSQQPCSRCSDGVIKLTPISAFSQDNIYEVQPPRVDRKSTEIFQAHIQASQGIMQPLGKEDSSMYREYIRNRYL</sequence>
<evidence type="ECO:0000255" key="1">
    <source>
        <dbReference type="PROSITE-ProRule" id="PRU00183"/>
    </source>
</evidence>
<evidence type="ECO:0000256" key="2">
    <source>
        <dbReference type="SAM" id="MobiDB-lite"/>
    </source>
</evidence>
<evidence type="ECO:0000269" key="3">
    <source>
    </source>
</evidence>
<evidence type="ECO:0000269" key="4">
    <source>
    </source>
</evidence>
<evidence type="ECO:0000269" key="5">
    <source>
    </source>
</evidence>
<evidence type="ECO:0000269" key="6">
    <source>
    </source>
</evidence>
<evidence type="ECO:0000269" key="7">
    <source>
    </source>
</evidence>
<evidence type="ECO:0000269" key="8">
    <source>
    </source>
</evidence>
<evidence type="ECO:0000269" key="9">
    <source>
    </source>
</evidence>
<evidence type="ECO:0000269" key="10">
    <source>
    </source>
</evidence>
<evidence type="ECO:0000269" key="11">
    <source>
    </source>
</evidence>
<evidence type="ECO:0000269" key="12">
    <source ref="2"/>
</evidence>
<evidence type="ECO:0000303" key="13">
    <source>
    </source>
</evidence>
<evidence type="ECO:0000305" key="14"/>
<evidence type="ECO:0000312" key="15">
    <source>
        <dbReference type="HGNC" id="HGNC:16873"/>
    </source>
</evidence>
<evidence type="ECO:0007744" key="16">
    <source>
        <dbReference type="PDB" id="7K1W"/>
    </source>
</evidence>
<protein>
    <recommendedName>
        <fullName evidence="14">Polyphosphoinositide phosphatase</fullName>
        <ecNumber evidence="3 11">3.1.3.-</ecNumber>
        <ecNumber evidence="3">3.1.3.36</ecNumber>
        <ecNumber evidence="3">3.1.3.86</ecNumber>
    </recommendedName>
    <alternativeName>
        <fullName>Phosphatidylinositol 3,5-bisphosphate 5-phosphatase</fullName>
    </alternativeName>
    <alternativeName>
        <fullName evidence="13">SAC domain-containing protein 3</fullName>
    </alternativeName>
    <alternativeName>
        <fullName evidence="14">Serine-protein phosphatase FIG4</fullName>
        <ecNumber evidence="11">3.1.3.16</ecNumber>
    </alternativeName>
</protein>
<organism>
    <name type="scientific">Homo sapiens</name>
    <name type="common">Human</name>
    <dbReference type="NCBI Taxonomy" id="9606"/>
    <lineage>
        <taxon>Eukaryota</taxon>
        <taxon>Metazoa</taxon>
        <taxon>Chordata</taxon>
        <taxon>Craniata</taxon>
        <taxon>Vertebrata</taxon>
        <taxon>Euteleostomi</taxon>
        <taxon>Mammalia</taxon>
        <taxon>Eutheria</taxon>
        <taxon>Euarchontoglires</taxon>
        <taxon>Primates</taxon>
        <taxon>Haplorrhini</taxon>
        <taxon>Catarrhini</taxon>
        <taxon>Hominidae</taxon>
        <taxon>Homo</taxon>
    </lineage>
</organism>
<gene>
    <name evidence="15" type="primary">FIG4</name>
    <name type="synonym">KIAA0274</name>
    <name evidence="13" type="synonym">SAC3</name>
</gene>
<reference key="1">
    <citation type="journal article" date="1996" name="DNA Res.">
        <title>Prediction of the coding sequences of unidentified human genes. VI. The coding sequences of 80 new genes (KIAA0201-KIAA0280) deduced by analysis of cDNA clones from cell line KG-1 and brain.</title>
        <authorList>
            <person name="Nagase T."/>
            <person name="Seki N."/>
            <person name="Ishikawa K."/>
            <person name="Ohira M."/>
            <person name="Kawarabayasi Y."/>
            <person name="Ohara O."/>
            <person name="Tanaka A."/>
            <person name="Kotani H."/>
            <person name="Miyajima N."/>
            <person name="Nomura N."/>
        </authorList>
    </citation>
    <scope>NUCLEOTIDE SEQUENCE [LARGE SCALE MRNA]</scope>
    <source>
        <tissue>Brain</tissue>
    </source>
</reference>
<reference key="2">
    <citation type="submission" date="2005-04" db="EMBL/GenBank/DDBJ databases">
        <authorList>
            <person name="Suzuki Y."/>
            <person name="Sugano S."/>
            <person name="Totoki Y."/>
            <person name="Toyoda A."/>
            <person name="Takeda T."/>
            <person name="Sakaki Y."/>
            <person name="Tanaka A."/>
            <person name="Yokoyama S."/>
        </authorList>
    </citation>
    <scope>NUCLEOTIDE SEQUENCE [LARGE SCALE MRNA]</scope>
    <scope>VARIANT ALA-654</scope>
    <source>
        <tissue>Colon</tissue>
    </source>
</reference>
<reference key="3">
    <citation type="journal article" date="2003" name="Nature">
        <title>The DNA sequence and analysis of human chromosome 6.</title>
        <authorList>
            <person name="Mungall A.J."/>
            <person name="Palmer S.A."/>
            <person name="Sims S.K."/>
            <person name="Edwards C.A."/>
            <person name="Ashurst J.L."/>
            <person name="Wilming L."/>
            <person name="Jones M.C."/>
            <person name="Horton R."/>
            <person name="Hunt S.E."/>
            <person name="Scott C.E."/>
            <person name="Gilbert J.G.R."/>
            <person name="Clamp M.E."/>
            <person name="Bethel G."/>
            <person name="Milne S."/>
            <person name="Ainscough R."/>
            <person name="Almeida J.P."/>
            <person name="Ambrose K.D."/>
            <person name="Andrews T.D."/>
            <person name="Ashwell R.I.S."/>
            <person name="Babbage A.K."/>
            <person name="Bagguley C.L."/>
            <person name="Bailey J."/>
            <person name="Banerjee R."/>
            <person name="Barker D.J."/>
            <person name="Barlow K.F."/>
            <person name="Bates K."/>
            <person name="Beare D.M."/>
            <person name="Beasley H."/>
            <person name="Beasley O."/>
            <person name="Bird C.P."/>
            <person name="Blakey S.E."/>
            <person name="Bray-Allen S."/>
            <person name="Brook J."/>
            <person name="Brown A.J."/>
            <person name="Brown J.Y."/>
            <person name="Burford D.C."/>
            <person name="Burrill W."/>
            <person name="Burton J."/>
            <person name="Carder C."/>
            <person name="Carter N.P."/>
            <person name="Chapman J.C."/>
            <person name="Clark S.Y."/>
            <person name="Clark G."/>
            <person name="Clee C.M."/>
            <person name="Clegg S."/>
            <person name="Cobley V."/>
            <person name="Collier R.E."/>
            <person name="Collins J.E."/>
            <person name="Colman L.K."/>
            <person name="Corby N.R."/>
            <person name="Coville G.J."/>
            <person name="Culley K.M."/>
            <person name="Dhami P."/>
            <person name="Davies J."/>
            <person name="Dunn M."/>
            <person name="Earthrowl M.E."/>
            <person name="Ellington A.E."/>
            <person name="Evans K.A."/>
            <person name="Faulkner L."/>
            <person name="Francis M.D."/>
            <person name="Frankish A."/>
            <person name="Frankland J."/>
            <person name="French L."/>
            <person name="Garner P."/>
            <person name="Garnett J."/>
            <person name="Ghori M.J."/>
            <person name="Gilby L.M."/>
            <person name="Gillson C.J."/>
            <person name="Glithero R.J."/>
            <person name="Grafham D.V."/>
            <person name="Grant M."/>
            <person name="Gribble S."/>
            <person name="Griffiths C."/>
            <person name="Griffiths M.N.D."/>
            <person name="Hall R."/>
            <person name="Halls K.S."/>
            <person name="Hammond S."/>
            <person name="Harley J.L."/>
            <person name="Hart E.A."/>
            <person name="Heath P.D."/>
            <person name="Heathcott R."/>
            <person name="Holmes S.J."/>
            <person name="Howden P.J."/>
            <person name="Howe K.L."/>
            <person name="Howell G.R."/>
            <person name="Huckle E."/>
            <person name="Humphray S.J."/>
            <person name="Humphries M.D."/>
            <person name="Hunt A.R."/>
            <person name="Johnson C.M."/>
            <person name="Joy A.A."/>
            <person name="Kay M."/>
            <person name="Keenan S.J."/>
            <person name="Kimberley A.M."/>
            <person name="King A."/>
            <person name="Laird G.K."/>
            <person name="Langford C."/>
            <person name="Lawlor S."/>
            <person name="Leongamornlert D.A."/>
            <person name="Leversha M."/>
            <person name="Lloyd C.R."/>
            <person name="Lloyd D.M."/>
            <person name="Loveland J.E."/>
            <person name="Lovell J."/>
            <person name="Martin S."/>
            <person name="Mashreghi-Mohammadi M."/>
            <person name="Maslen G.L."/>
            <person name="Matthews L."/>
            <person name="McCann O.T."/>
            <person name="McLaren S.J."/>
            <person name="McLay K."/>
            <person name="McMurray A."/>
            <person name="Moore M.J.F."/>
            <person name="Mullikin J.C."/>
            <person name="Niblett D."/>
            <person name="Nickerson T."/>
            <person name="Novik K.L."/>
            <person name="Oliver K."/>
            <person name="Overton-Larty E.K."/>
            <person name="Parker A."/>
            <person name="Patel R."/>
            <person name="Pearce A.V."/>
            <person name="Peck A.I."/>
            <person name="Phillimore B.J.C.T."/>
            <person name="Phillips S."/>
            <person name="Plumb R.W."/>
            <person name="Porter K.M."/>
            <person name="Ramsey Y."/>
            <person name="Ranby S.A."/>
            <person name="Rice C.M."/>
            <person name="Ross M.T."/>
            <person name="Searle S.M."/>
            <person name="Sehra H.K."/>
            <person name="Sheridan E."/>
            <person name="Skuce C.D."/>
            <person name="Smith S."/>
            <person name="Smith M."/>
            <person name="Spraggon L."/>
            <person name="Squares S.L."/>
            <person name="Steward C.A."/>
            <person name="Sycamore N."/>
            <person name="Tamlyn-Hall G."/>
            <person name="Tester J."/>
            <person name="Theaker A.J."/>
            <person name="Thomas D.W."/>
            <person name="Thorpe A."/>
            <person name="Tracey A."/>
            <person name="Tromans A."/>
            <person name="Tubby B."/>
            <person name="Wall M."/>
            <person name="Wallis J.M."/>
            <person name="West A.P."/>
            <person name="White S.S."/>
            <person name="Whitehead S.L."/>
            <person name="Whittaker H."/>
            <person name="Wild A."/>
            <person name="Willey D.J."/>
            <person name="Wilmer T.E."/>
            <person name="Wood J.M."/>
            <person name="Wray P.W."/>
            <person name="Wyatt J.C."/>
            <person name="Young L."/>
            <person name="Younger R.M."/>
            <person name="Bentley D.R."/>
            <person name="Coulson A."/>
            <person name="Durbin R.M."/>
            <person name="Hubbard T."/>
            <person name="Sulston J.E."/>
            <person name="Dunham I."/>
            <person name="Rogers J."/>
            <person name="Beck S."/>
        </authorList>
    </citation>
    <scope>NUCLEOTIDE SEQUENCE [LARGE SCALE GENOMIC DNA]</scope>
</reference>
<reference key="4">
    <citation type="journal article" date="2004" name="Genome Res.">
        <title>The status, quality, and expansion of the NIH full-length cDNA project: the Mammalian Gene Collection (MGC).</title>
        <authorList>
            <consortium name="The MGC Project Team"/>
        </authorList>
    </citation>
    <scope>NUCLEOTIDE SEQUENCE [LARGE SCALE MRNA]</scope>
    <source>
        <tissue>Brain</tissue>
    </source>
</reference>
<reference key="5">
    <citation type="journal article" date="2007" name="J. Biol. Chem.">
        <title>Core protein machinery for mammalian phosphatidylinositol 3,5-bisphosphate synthesis and turnover that regulates the progression of endosomal transport. Novel Sac phosphatase joins the ArPIKfyve-PIKfyve complex.</title>
        <authorList>
            <person name="Sbrissa D."/>
            <person name="Ikonomov O.C."/>
            <person name="Fu Z."/>
            <person name="Ijuin T."/>
            <person name="Gruenberg J."/>
            <person name="Takenawa T."/>
            <person name="Shisheva A."/>
        </authorList>
    </citation>
    <scope>FUNCTION</scope>
    <scope>SUBCELLULAR LOCATION</scope>
    <scope>IDENTIFICATION IN THE PI(3,5)P2 REGULATORY COMPLEX</scope>
    <scope>MUTAGENESIS OF ASP-488</scope>
</reference>
<reference key="6">
    <citation type="journal article" date="2008" name="J. Mol. Biol.">
        <title>ArPIKfyve homomeric and heteromeric interactions scaffold PIKfyve and Sac3 in a complex to promote PIKfyve activity and functionality.</title>
        <authorList>
            <person name="Sbrissa D."/>
            <person name="Ikonomov O.C."/>
            <person name="Fenner H."/>
            <person name="Shisheva A."/>
        </authorList>
    </citation>
    <scope>IDENTIFICATION IN THE PI(3,5)P2 REGULATORY COMPLEX</scope>
</reference>
<reference evidence="16" key="7">
    <citation type="journal article" date="2020" name="Mol. Cell">
        <title>Insights into Lysosomal PI(3,5)P2 Homeostasis from a Structural-Biochemical Analysis of the PIKfyve Lipid Kinase Complex.</title>
        <authorList>
            <person name="Lees J.A."/>
            <person name="Li P."/>
            <person name="Kumar N."/>
            <person name="Weisman L.S."/>
            <person name="Reinisch K.M."/>
        </authorList>
    </citation>
    <scope>STRUCTURE BY ELECTRON MICROSCOPY (5.10 ANGSTROMS)</scope>
    <scope>IDENTIFICATION IN THE PI(3,5)P2 REGULATORY COMPLEX</scope>
    <scope>FUNCTION</scope>
    <scope>CATALYTIC ACTIVITY</scope>
    <scope>MUTAGENESIS OF CYS-486</scope>
</reference>
<reference key="8">
    <citation type="journal article" date="2007" name="Nature">
        <title>Mutation of FIG4 causes neurodegeneration in the pale tremor mouse and patients with CMT4J.</title>
        <authorList>
            <person name="Chow C.Y."/>
            <person name="Zhang Y."/>
            <person name="Dowling J.J."/>
            <person name="Jin N."/>
            <person name="Adamska M."/>
            <person name="Shiga K."/>
            <person name="Szigeti K."/>
            <person name="Shy M.E."/>
            <person name="Li J."/>
            <person name="Zhang X."/>
            <person name="Lupski J.R."/>
            <person name="Weisman L.S."/>
            <person name="Meisler M.H."/>
        </authorList>
    </citation>
    <scope>VARIANT CMT4J THR-41</scope>
</reference>
<reference key="9">
    <citation type="journal article" date="2009" name="Am. J. Hum. Genet.">
        <title>Deleterious variants of FIG4, a phosphoinositide phosphatase, in patients with ALS.</title>
        <authorList>
            <person name="Chow C.Y."/>
            <person name="Landers J.E."/>
            <person name="Bergren S.K."/>
            <person name="Sapp P.C."/>
            <person name="Grant A.E."/>
            <person name="Jones J.M."/>
            <person name="Everett L."/>
            <person name="Lenk G.M."/>
            <person name="McKenna-Yasek D.M."/>
            <person name="Weisman L.S."/>
            <person name="Figlewicz D."/>
            <person name="Brown R.H."/>
            <person name="Meisler M.H."/>
        </authorList>
    </citation>
    <scope>VARIANT ALS11 TYR-53</scope>
    <scope>VARIANTS GLY-48; GLY-388; VAL-411; CYS-647 AND THR-902</scope>
</reference>
<reference key="10">
    <citation type="journal article" date="2011" name="Brain">
        <title>Distinctive genetic and clinical features of CMT4J: a severe neuropathy caused by mutations in the PI(3,5)P(2) phosphatase FIG4.</title>
        <authorList>
            <person name="Nicholson G."/>
            <person name="Lenk G.M."/>
            <person name="Reddel S.W."/>
            <person name="Grant A.E."/>
            <person name="Towne C.F."/>
            <person name="Ferguson C.J."/>
            <person name="Simpson E."/>
            <person name="Scheuerle A."/>
            <person name="Yasick M."/>
            <person name="Hoffman S."/>
            <person name="Blouin R."/>
            <person name="Brandt C."/>
            <person name="Coppola G."/>
            <person name="Biesecker L.G."/>
            <person name="Batish S.D."/>
            <person name="Meisler M.H."/>
        </authorList>
    </citation>
    <scope>VARIANTS CMT4J PRO-17; THR-41 AND LYS-302</scope>
    <scope>CHARACTERIZATION OF VARIANT CMT4J LYS-302</scope>
</reference>
<reference key="11">
    <citation type="journal article" date="2011" name="PLoS Genet.">
        <title>Pathogenic mechanism of the FIG4 mutation responsible for Charcot-Marie-Tooth disease CMT4J.</title>
        <authorList>
            <person name="Lenk G.M."/>
            <person name="Ferguson C.J."/>
            <person name="Chow C.Y."/>
            <person name="Jin N."/>
            <person name="Jones J.M."/>
            <person name="Grant A.E."/>
            <person name="Zolov S.N."/>
            <person name="Winters J.J."/>
            <person name="Giger R.J."/>
            <person name="Dowling J.J."/>
            <person name="Weisman L.S."/>
            <person name="Meisler M.H."/>
        </authorList>
    </citation>
    <scope>CHARACTERIZATION OF VARIANT CMT4J THR-41</scope>
</reference>
<reference key="12">
    <citation type="journal article" date="2013" name="Am. J. Hum. Genet.">
        <title>Yunis-Varon syndrome is caused by mutations in FIG4, encoding a phosphoinositide phosphatase.</title>
        <authorList>
            <person name="Campeau P.M."/>
            <person name="Lenk G.M."/>
            <person name="Lu J.T."/>
            <person name="Bae Y."/>
            <person name="Burrage L."/>
            <person name="Turnpenny P."/>
            <person name="Roman Corona-Rivera J."/>
            <person name="Morandi L."/>
            <person name="Mora M."/>
            <person name="Reutter H."/>
            <person name="Vulto-van Silfhout A.T."/>
            <person name="Faivre L."/>
            <person name="Haan E."/>
            <person name="Gibbs R.A."/>
            <person name="Meisler M.H."/>
            <person name="Lee B.H."/>
        </authorList>
    </citation>
    <scope>VARIANTS YVS ASP-104 AND PRO-175</scope>
    <scope>CHARACTERIZATION OF VARIANTS YVS ASP-104 AND PRO-175</scope>
</reference>
<reference key="13">
    <citation type="journal article" date="2014" name="Neurology">
        <title>Role of the phosphoinositide phosphatase FIG4 gene in familial epilepsy with polymicrogyria.</title>
        <authorList>
            <person name="Baulac S."/>
            <person name="Lenk G.M."/>
            <person name="Dufresnois B."/>
            <person name="Ouled Amar Bencheikh B."/>
            <person name="Couarch P."/>
            <person name="Renard J."/>
            <person name="Larson P.A."/>
            <person name="Ferguson C.J."/>
            <person name="Noe E."/>
            <person name="Poirier K."/>
            <person name="Hubans C."/>
            <person name="Ferreira S."/>
            <person name="Guerrini R."/>
            <person name="Ouazzani R."/>
            <person name="El Hachimi K.H."/>
            <person name="Meisler M.H."/>
            <person name="Leguern E."/>
        </authorList>
    </citation>
    <scope>INVOLVEMENT IN BTOP</scope>
    <scope>VARIANT BTOP VAL-783</scope>
    <scope>CHARACTERIZATION OF VARIANT BTOP VAL-783</scope>
</reference>
<accession>Q92562</accession>
<accession>Q53H49</accession>
<accession>Q5TCS6</accession>
<keyword id="KW-0002">3D-structure</keyword>
<keyword id="KW-0036">Amyotrophic lateral sclerosis</keyword>
<keyword id="KW-0144">Charcot-Marie-Tooth disease</keyword>
<keyword id="KW-0225">Disease variant</keyword>
<keyword id="KW-0967">Endosome</keyword>
<keyword id="KW-0378">Hydrolase</keyword>
<keyword id="KW-0472">Membrane</keyword>
<keyword id="KW-0523">Neurodegeneration</keyword>
<keyword id="KW-0622">Neuropathy</keyword>
<keyword id="KW-1267">Proteomics identification</keyword>
<keyword id="KW-1185">Reference proteome</keyword>
<proteinExistence type="evidence at protein level"/>
<name>FIG4_HUMAN</name>